<comment type="function">
    <text evidence="1">Required for maturation of 30S ribosomal subunits.</text>
</comment>
<comment type="subcellular location">
    <subcellularLocation>
        <location evidence="1">Cytoplasm</location>
    </subcellularLocation>
</comment>
<comment type="similarity">
    <text evidence="1">Belongs to the RimP family.</text>
</comment>
<proteinExistence type="inferred from homology"/>
<name>RIMP_CLOBH</name>
<organism>
    <name type="scientific">Clostridium botulinum (strain Hall / ATCC 3502 / NCTC 13319 / Type A)</name>
    <dbReference type="NCBI Taxonomy" id="441771"/>
    <lineage>
        <taxon>Bacteria</taxon>
        <taxon>Bacillati</taxon>
        <taxon>Bacillota</taxon>
        <taxon>Clostridia</taxon>
        <taxon>Eubacteriales</taxon>
        <taxon>Clostridiaceae</taxon>
        <taxon>Clostridium</taxon>
    </lineage>
</organism>
<accession>A5I4J7</accession>
<accession>A7G5P8</accession>
<protein>
    <recommendedName>
        <fullName evidence="1">Ribosome maturation factor RimP</fullName>
    </recommendedName>
</protein>
<keyword id="KW-0963">Cytoplasm</keyword>
<keyword id="KW-1185">Reference proteome</keyword>
<keyword id="KW-0690">Ribosome biogenesis</keyword>
<sequence>MSKHSLIENLKEQIEPIAEGLDYELYHIEFVKEGKENYLRIYIDSENGVSLEGCEKVSRAISELLDDIDPIQESYYLEVSSPGIDRVLYTDKHLEKYKSYNIVLNLYSPIDKKKKYEGELVDFNENEIDIKVEENIVTIPREKISKTTLKGEL</sequence>
<gene>
    <name evidence="1" type="primary">rimP</name>
    <name type="ordered locus">CBO2421</name>
    <name type="ordered locus">CLC_2269</name>
</gene>
<evidence type="ECO:0000255" key="1">
    <source>
        <dbReference type="HAMAP-Rule" id="MF_01077"/>
    </source>
</evidence>
<feature type="chain" id="PRO_1000064703" description="Ribosome maturation factor RimP">
    <location>
        <begin position="1"/>
        <end position="153"/>
    </location>
</feature>
<dbReference type="EMBL" id="CP000727">
    <property type="protein sequence ID" value="ABS37158.1"/>
    <property type="molecule type" value="Genomic_DNA"/>
</dbReference>
<dbReference type="EMBL" id="AM412317">
    <property type="protein sequence ID" value="CAL83969.1"/>
    <property type="molecule type" value="Genomic_DNA"/>
</dbReference>
<dbReference type="RefSeq" id="WP_011986793.1">
    <property type="nucleotide sequence ID" value="NC_009698.1"/>
</dbReference>
<dbReference type="RefSeq" id="YP_001254918.1">
    <property type="nucleotide sequence ID" value="NC_009495.1"/>
</dbReference>
<dbReference type="RefSeq" id="YP_001388113.1">
    <property type="nucleotide sequence ID" value="NC_009698.1"/>
</dbReference>
<dbReference type="SMR" id="A5I4J7"/>
<dbReference type="GeneID" id="5187192"/>
<dbReference type="KEGG" id="cbh:CLC_2269"/>
<dbReference type="KEGG" id="cbo:CBO2421"/>
<dbReference type="PATRIC" id="fig|413999.7.peg.2399"/>
<dbReference type="HOGENOM" id="CLU_070525_2_0_9"/>
<dbReference type="PRO" id="PR:A5I4J7"/>
<dbReference type="Proteomes" id="UP000001986">
    <property type="component" value="Chromosome"/>
</dbReference>
<dbReference type="GO" id="GO:0005829">
    <property type="term" value="C:cytosol"/>
    <property type="evidence" value="ECO:0000318"/>
    <property type="project" value="GO_Central"/>
</dbReference>
<dbReference type="GO" id="GO:0000028">
    <property type="term" value="P:ribosomal small subunit assembly"/>
    <property type="evidence" value="ECO:0000318"/>
    <property type="project" value="GO_Central"/>
</dbReference>
<dbReference type="GO" id="GO:0006412">
    <property type="term" value="P:translation"/>
    <property type="evidence" value="ECO:0000318"/>
    <property type="project" value="GO_Central"/>
</dbReference>
<dbReference type="CDD" id="cd01734">
    <property type="entry name" value="YlxS_C"/>
    <property type="match status" value="1"/>
</dbReference>
<dbReference type="FunFam" id="2.30.30.180:FF:000007">
    <property type="entry name" value="Ribosome maturation factor RimP"/>
    <property type="match status" value="1"/>
</dbReference>
<dbReference type="FunFam" id="3.30.300.70:FF:000001">
    <property type="entry name" value="Ribosome maturation factor RimP"/>
    <property type="match status" value="1"/>
</dbReference>
<dbReference type="Gene3D" id="2.30.30.180">
    <property type="entry name" value="Ribosome maturation factor RimP, C-terminal domain"/>
    <property type="match status" value="1"/>
</dbReference>
<dbReference type="Gene3D" id="3.30.300.70">
    <property type="entry name" value="RimP-like superfamily, N-terminal"/>
    <property type="match status" value="1"/>
</dbReference>
<dbReference type="HAMAP" id="MF_01077">
    <property type="entry name" value="RimP"/>
    <property type="match status" value="1"/>
</dbReference>
<dbReference type="InterPro" id="IPR003728">
    <property type="entry name" value="Ribosome_maturation_RimP"/>
</dbReference>
<dbReference type="InterPro" id="IPR028998">
    <property type="entry name" value="RimP_C"/>
</dbReference>
<dbReference type="InterPro" id="IPR036847">
    <property type="entry name" value="RimP_C_sf"/>
</dbReference>
<dbReference type="InterPro" id="IPR028989">
    <property type="entry name" value="RimP_N"/>
</dbReference>
<dbReference type="InterPro" id="IPR035956">
    <property type="entry name" value="RimP_N_sf"/>
</dbReference>
<dbReference type="NCBIfam" id="NF000934">
    <property type="entry name" value="PRK00092.3-1"/>
    <property type="match status" value="1"/>
</dbReference>
<dbReference type="PANTHER" id="PTHR33867">
    <property type="entry name" value="RIBOSOME MATURATION FACTOR RIMP"/>
    <property type="match status" value="1"/>
</dbReference>
<dbReference type="PANTHER" id="PTHR33867:SF1">
    <property type="entry name" value="RIBOSOME MATURATION FACTOR RIMP"/>
    <property type="match status" value="1"/>
</dbReference>
<dbReference type="Pfam" id="PF17384">
    <property type="entry name" value="DUF150_C"/>
    <property type="match status" value="1"/>
</dbReference>
<dbReference type="Pfam" id="PF02576">
    <property type="entry name" value="RimP_N"/>
    <property type="match status" value="1"/>
</dbReference>
<dbReference type="SUPFAM" id="SSF74942">
    <property type="entry name" value="YhbC-like, C-terminal domain"/>
    <property type="match status" value="1"/>
</dbReference>
<dbReference type="SUPFAM" id="SSF75420">
    <property type="entry name" value="YhbC-like, N-terminal domain"/>
    <property type="match status" value="1"/>
</dbReference>
<reference key="1">
    <citation type="journal article" date="2007" name="Genome Res.">
        <title>Genome sequence of a proteolytic (Group I) Clostridium botulinum strain Hall A and comparative analysis of the clostridial genomes.</title>
        <authorList>
            <person name="Sebaihia M."/>
            <person name="Peck M.W."/>
            <person name="Minton N.P."/>
            <person name="Thomson N.R."/>
            <person name="Holden M.T.G."/>
            <person name="Mitchell W.J."/>
            <person name="Carter A.T."/>
            <person name="Bentley S.D."/>
            <person name="Mason D.R."/>
            <person name="Crossman L."/>
            <person name="Paul C.J."/>
            <person name="Ivens A."/>
            <person name="Wells-Bennik M.H.J."/>
            <person name="Davis I.J."/>
            <person name="Cerdeno-Tarraga A.M."/>
            <person name="Churcher C."/>
            <person name="Quail M.A."/>
            <person name="Chillingworth T."/>
            <person name="Feltwell T."/>
            <person name="Fraser A."/>
            <person name="Goodhead I."/>
            <person name="Hance Z."/>
            <person name="Jagels K."/>
            <person name="Larke N."/>
            <person name="Maddison M."/>
            <person name="Moule S."/>
            <person name="Mungall K."/>
            <person name="Norbertczak H."/>
            <person name="Rabbinowitsch E."/>
            <person name="Sanders M."/>
            <person name="Simmonds M."/>
            <person name="White B."/>
            <person name="Whithead S."/>
            <person name="Parkhill J."/>
        </authorList>
    </citation>
    <scope>NUCLEOTIDE SEQUENCE [LARGE SCALE GENOMIC DNA]</scope>
    <source>
        <strain>Hall / ATCC 3502 / NCTC 13319 / Type A</strain>
    </source>
</reference>
<reference key="2">
    <citation type="journal article" date="2007" name="PLoS ONE">
        <title>Analysis of the neurotoxin complex genes in Clostridium botulinum A1-A4 and B1 strains: BoNT/A3, /Ba4 and /B1 clusters are located within plasmids.</title>
        <authorList>
            <person name="Smith T.J."/>
            <person name="Hill K.K."/>
            <person name="Foley B.T."/>
            <person name="Detter J.C."/>
            <person name="Munk A.C."/>
            <person name="Bruce D.C."/>
            <person name="Doggett N.A."/>
            <person name="Smith L.A."/>
            <person name="Marks J.D."/>
            <person name="Xie G."/>
            <person name="Brettin T.S."/>
        </authorList>
    </citation>
    <scope>NUCLEOTIDE SEQUENCE [LARGE SCALE GENOMIC DNA]</scope>
    <source>
        <strain>Hall / ATCC 3502 / NCTC 13319 / Type A</strain>
    </source>
</reference>